<feature type="chain" id="PRO_0000155714" description="Homoserine O-acetyltransferase">
    <location>
        <begin position="1"/>
        <end position="377"/>
    </location>
</feature>
<feature type="domain" description="AB hydrolase-1" evidence="1">
    <location>
        <begin position="48"/>
        <end position="347"/>
    </location>
</feature>
<feature type="active site" description="Nucleophile" evidence="1">
    <location>
        <position position="143"/>
    </location>
</feature>
<feature type="active site" evidence="1">
    <location>
        <position position="311"/>
    </location>
</feature>
<feature type="active site" evidence="1">
    <location>
        <position position="341"/>
    </location>
</feature>
<feature type="binding site" evidence="1">
    <location>
        <position position="213"/>
    </location>
    <ligand>
        <name>substrate</name>
    </ligand>
</feature>
<feature type="binding site" evidence="1">
    <location>
        <position position="342"/>
    </location>
    <ligand>
        <name>substrate</name>
    </ligand>
</feature>
<reference key="1">
    <citation type="journal article" date="2003" name="Genome Res.">
        <title>Comparative complete genome sequence analysis of the amino acid replacements responsible for the thermostability of Corynebacterium efficiens.</title>
        <authorList>
            <person name="Nishio Y."/>
            <person name="Nakamura Y."/>
            <person name="Kawarabayasi Y."/>
            <person name="Usuda Y."/>
            <person name="Kimura E."/>
            <person name="Sugimoto S."/>
            <person name="Matsui K."/>
            <person name="Yamagishi A."/>
            <person name="Kikuchi H."/>
            <person name="Ikeo K."/>
            <person name="Gojobori T."/>
        </authorList>
    </citation>
    <scope>NUCLEOTIDE SEQUENCE [LARGE SCALE GENOMIC DNA]</scope>
    <source>
        <strain>DSM 44549 / YS-314 / AJ 12310 / JCM 11189 / NBRC 100395</strain>
    </source>
</reference>
<comment type="function">
    <text evidence="1">Transfers an acetyl group from acetyl-CoA to L-homoserine, forming acetyl-L-homoserine.</text>
</comment>
<comment type="catalytic activity">
    <reaction evidence="1">
        <text>L-homoserine + acetyl-CoA = O-acetyl-L-homoserine + CoA</text>
        <dbReference type="Rhea" id="RHEA:13701"/>
        <dbReference type="ChEBI" id="CHEBI:57287"/>
        <dbReference type="ChEBI" id="CHEBI:57288"/>
        <dbReference type="ChEBI" id="CHEBI:57476"/>
        <dbReference type="ChEBI" id="CHEBI:57716"/>
        <dbReference type="EC" id="2.3.1.31"/>
    </reaction>
</comment>
<comment type="pathway">
    <text evidence="1">Amino-acid biosynthesis; L-methionine biosynthesis via de novo pathway; O-acetyl-L-homoserine from L-homoserine: step 1/1.</text>
</comment>
<comment type="subunit">
    <text evidence="1">Homodimer.</text>
</comment>
<comment type="subcellular location">
    <subcellularLocation>
        <location evidence="1">Cytoplasm</location>
    </subcellularLocation>
</comment>
<comment type="similarity">
    <text evidence="1">Belongs to the AB hydrolase superfamily. MetX family.</text>
</comment>
<comment type="sequence caution" evidence="2">
    <conflict type="erroneous initiation">
        <sequence resource="EMBL-CDS" id="BAC17488"/>
    </conflict>
</comment>
<evidence type="ECO:0000255" key="1">
    <source>
        <dbReference type="HAMAP-Rule" id="MF_00296"/>
    </source>
</evidence>
<evidence type="ECO:0000305" key="2"/>
<proteinExistence type="inferred from homology"/>
<dbReference type="EC" id="2.3.1.31" evidence="1"/>
<dbReference type="EMBL" id="BA000035">
    <property type="protein sequence ID" value="BAC17488.1"/>
    <property type="status" value="ALT_INIT"/>
    <property type="molecule type" value="Genomic_DNA"/>
</dbReference>
<dbReference type="RefSeq" id="WP_035109711.1">
    <property type="nucleotide sequence ID" value="NC_004369.1"/>
</dbReference>
<dbReference type="SMR" id="Q8FRT0"/>
<dbReference type="STRING" id="196164.gene:10741080"/>
<dbReference type="ESTHER" id="coref-METX">
    <property type="family name" value="Homoserine_transacetylase"/>
</dbReference>
<dbReference type="KEGG" id="cef:CE0678"/>
<dbReference type="eggNOG" id="COG2021">
    <property type="taxonomic scope" value="Bacteria"/>
</dbReference>
<dbReference type="HOGENOM" id="CLU_028760_1_0_11"/>
<dbReference type="OrthoDB" id="9800754at2"/>
<dbReference type="UniPathway" id="UPA00051">
    <property type="reaction ID" value="UER00074"/>
</dbReference>
<dbReference type="Proteomes" id="UP000001409">
    <property type="component" value="Chromosome"/>
</dbReference>
<dbReference type="GO" id="GO:0005737">
    <property type="term" value="C:cytoplasm"/>
    <property type="evidence" value="ECO:0007669"/>
    <property type="project" value="UniProtKB-SubCell"/>
</dbReference>
<dbReference type="GO" id="GO:0004414">
    <property type="term" value="F:homoserine O-acetyltransferase activity"/>
    <property type="evidence" value="ECO:0007669"/>
    <property type="project" value="UniProtKB-UniRule"/>
</dbReference>
<dbReference type="GO" id="GO:0009092">
    <property type="term" value="P:homoserine metabolic process"/>
    <property type="evidence" value="ECO:0007669"/>
    <property type="project" value="TreeGrafter"/>
</dbReference>
<dbReference type="GO" id="GO:0009086">
    <property type="term" value="P:methionine biosynthetic process"/>
    <property type="evidence" value="ECO:0007669"/>
    <property type="project" value="UniProtKB-UniRule"/>
</dbReference>
<dbReference type="Gene3D" id="3.40.50.1820">
    <property type="entry name" value="alpha/beta hydrolase"/>
    <property type="match status" value="1"/>
</dbReference>
<dbReference type="HAMAP" id="MF_00296">
    <property type="entry name" value="MetX_acyltransf"/>
    <property type="match status" value="1"/>
</dbReference>
<dbReference type="InterPro" id="IPR000073">
    <property type="entry name" value="AB_hydrolase_1"/>
</dbReference>
<dbReference type="InterPro" id="IPR029058">
    <property type="entry name" value="AB_hydrolase_fold"/>
</dbReference>
<dbReference type="InterPro" id="IPR008220">
    <property type="entry name" value="HAT_MetX-like"/>
</dbReference>
<dbReference type="NCBIfam" id="TIGR01392">
    <property type="entry name" value="homoserO_Ac_trn"/>
    <property type="match status" value="1"/>
</dbReference>
<dbReference type="NCBIfam" id="NF001209">
    <property type="entry name" value="PRK00175.1"/>
    <property type="match status" value="1"/>
</dbReference>
<dbReference type="PANTHER" id="PTHR32268">
    <property type="entry name" value="HOMOSERINE O-ACETYLTRANSFERASE"/>
    <property type="match status" value="1"/>
</dbReference>
<dbReference type="PANTHER" id="PTHR32268:SF11">
    <property type="entry name" value="HOMOSERINE O-ACETYLTRANSFERASE"/>
    <property type="match status" value="1"/>
</dbReference>
<dbReference type="Pfam" id="PF00561">
    <property type="entry name" value="Abhydrolase_1"/>
    <property type="match status" value="1"/>
</dbReference>
<dbReference type="PIRSF" id="PIRSF000443">
    <property type="entry name" value="Homoser_Ac_trans"/>
    <property type="match status" value="1"/>
</dbReference>
<dbReference type="SUPFAM" id="SSF53474">
    <property type="entry name" value="alpha/beta-Hydrolases"/>
    <property type="match status" value="1"/>
</dbReference>
<keyword id="KW-0012">Acyltransferase</keyword>
<keyword id="KW-0028">Amino-acid biosynthesis</keyword>
<keyword id="KW-0963">Cytoplasm</keyword>
<keyword id="KW-0486">Methionine biosynthesis</keyword>
<keyword id="KW-1185">Reference proteome</keyword>
<keyword id="KW-0808">Transferase</keyword>
<protein>
    <recommendedName>
        <fullName evidence="1">Homoserine O-acetyltransferase</fullName>
        <shortName evidence="1">HAT</shortName>
        <ecNumber evidence="1">2.3.1.31</ecNumber>
    </recommendedName>
    <alternativeName>
        <fullName evidence="1">Homoserine transacetylase</fullName>
        <shortName evidence="1">HTA</shortName>
    </alternativeName>
</protein>
<accession>Q8FRT0</accession>
<sequence>MPQLAPEGQLATQQIGDIRTEAGALIPDVTIAYHRWGEYEENADGSTNVVLIEHALTGDSNAADWWCDLVGPGKAIDTDLYCVICTNVLGGCNGSTGPSSQHPDGGFWGSRFPATDIRDQVKAEKQFLDAIGITRVKAVLGGSMGGARTLEWAAMFPDVVDAAAVLAVSARASAWQIGIQSAQIMAIENDHHWHEGNYYESGCNPSKGLGAARRIAHLTYRGELEIDERFGTQPQKGENPLGPYRRPDQRFAVESYLDHQADKLVKRFDAGSYVTLTDALNRHDIGRGRGGLNKALESITIPVMVAGVDTDILYPYHQQEHLSRNLGNLLAMAKIVSPVGHDAFLTESRQMDRILRNFFSLISPDEDNPSTYIEFFI</sequence>
<gene>
    <name evidence="1" type="primary">metXA</name>
    <name type="ordered locus">CE0678</name>
</gene>
<name>METXA_COREF</name>
<organism>
    <name type="scientific">Corynebacterium efficiens (strain DSM 44549 / YS-314 / AJ 12310 / JCM 11189 / NBRC 100395)</name>
    <dbReference type="NCBI Taxonomy" id="196164"/>
    <lineage>
        <taxon>Bacteria</taxon>
        <taxon>Bacillati</taxon>
        <taxon>Actinomycetota</taxon>
        <taxon>Actinomycetes</taxon>
        <taxon>Mycobacteriales</taxon>
        <taxon>Corynebacteriaceae</taxon>
        <taxon>Corynebacterium</taxon>
    </lineage>
</organism>